<evidence type="ECO:0000255" key="1"/>
<evidence type="ECO:0000255" key="2">
    <source>
        <dbReference type="HAMAP-Rule" id="MF_00913"/>
    </source>
</evidence>
<proteinExistence type="inferred from homology"/>
<organism>
    <name type="scientific">Methylococcus capsulatus (strain ATCC 33009 / NCIMB 11132 / Bath)</name>
    <dbReference type="NCBI Taxonomy" id="243233"/>
    <lineage>
        <taxon>Bacteria</taxon>
        <taxon>Pseudomonadati</taxon>
        <taxon>Pseudomonadota</taxon>
        <taxon>Gammaproteobacteria</taxon>
        <taxon>Methylococcales</taxon>
        <taxon>Methylococcaceae</taxon>
        <taxon>Methylococcus</taxon>
    </lineage>
</organism>
<comment type="function">
    <text evidence="2">Peptidoglycan polymerase that is essential for cell division.</text>
</comment>
<comment type="catalytic activity">
    <reaction evidence="2">
        <text>[GlcNAc-(1-&gt;4)-Mur2Ac(oyl-L-Ala-gamma-D-Glu-L-Lys-D-Ala-D-Ala)](n)-di-trans,octa-cis-undecaprenyl diphosphate + beta-D-GlcNAc-(1-&gt;4)-Mur2Ac(oyl-L-Ala-gamma-D-Glu-L-Lys-D-Ala-D-Ala)-di-trans,octa-cis-undecaprenyl diphosphate = [GlcNAc-(1-&gt;4)-Mur2Ac(oyl-L-Ala-gamma-D-Glu-L-Lys-D-Ala-D-Ala)](n+1)-di-trans,octa-cis-undecaprenyl diphosphate + di-trans,octa-cis-undecaprenyl diphosphate + H(+)</text>
        <dbReference type="Rhea" id="RHEA:23708"/>
        <dbReference type="Rhea" id="RHEA-COMP:9602"/>
        <dbReference type="Rhea" id="RHEA-COMP:9603"/>
        <dbReference type="ChEBI" id="CHEBI:15378"/>
        <dbReference type="ChEBI" id="CHEBI:58405"/>
        <dbReference type="ChEBI" id="CHEBI:60033"/>
        <dbReference type="ChEBI" id="CHEBI:78435"/>
        <dbReference type="EC" id="2.4.99.28"/>
    </reaction>
</comment>
<comment type="pathway">
    <text evidence="2">Cell wall biogenesis; peptidoglycan biosynthesis.</text>
</comment>
<comment type="subcellular location">
    <subcellularLocation>
        <location evidence="2">Cell inner membrane</location>
        <topology evidence="2">Multi-pass membrane protein</topology>
    </subcellularLocation>
    <text evidence="2">Localizes to the division septum.</text>
</comment>
<comment type="similarity">
    <text evidence="2">Belongs to the SEDS family. FtsW subfamily.</text>
</comment>
<keyword id="KW-0131">Cell cycle</keyword>
<keyword id="KW-0132">Cell division</keyword>
<keyword id="KW-0997">Cell inner membrane</keyword>
<keyword id="KW-1003">Cell membrane</keyword>
<keyword id="KW-0133">Cell shape</keyword>
<keyword id="KW-0961">Cell wall biogenesis/degradation</keyword>
<keyword id="KW-0328">Glycosyltransferase</keyword>
<keyword id="KW-0472">Membrane</keyword>
<keyword id="KW-0573">Peptidoglycan synthesis</keyword>
<keyword id="KW-1185">Reference proteome</keyword>
<keyword id="KW-0808">Transferase</keyword>
<keyword id="KW-0812">Transmembrane</keyword>
<keyword id="KW-1133">Transmembrane helix</keyword>
<name>FTSW_METCA</name>
<sequence>MSTQAIRGARGLVLKWGAGRFYLDTVLLSVSLGLMLFGFVMVSSASLHLGEKMASDSFYFPKHQLVHILLGLAAGWGAARVRLDTLERHSRSLFWAGIALLVLVLIPGVGKSVNGSVRWINLFGLRVQVSEVFKLVAAIYVAGYISRHLDTVRTSVKGMIFPLSLLAIGAVLLLKEPDFGATAVVMATALGMLFLAGARLWVFVGLLGLVAVAGTVLIYTAEYRLRRVLSFLDPWADPLNSGFQLTQALIAFGRGEWQGVGLGSSVQKLFYLPEAHTDFLFSVIGEELGLWGATTVILLFAIVVWRALAIGRLAERSGNLFAAFLAYGIGIWLGLQSFINMGVNMGMLPTKGLTLPLMSYGGGSMMVVCAAIGLLFRIRSEAVASFLGNGRKGLWPGV</sequence>
<gene>
    <name evidence="2" type="primary">ftsW</name>
    <name type="ordered locus">MCA2430</name>
</gene>
<protein>
    <recommendedName>
        <fullName evidence="2">Probable peptidoglycan glycosyltransferase FtsW</fullName>
        <shortName evidence="2">PGT</shortName>
        <ecNumber evidence="2">2.4.99.28</ecNumber>
    </recommendedName>
    <alternativeName>
        <fullName evidence="2">Cell division protein FtsW</fullName>
    </alternativeName>
    <alternativeName>
        <fullName evidence="2">Cell wall polymerase</fullName>
    </alternativeName>
    <alternativeName>
        <fullName evidence="2">Peptidoglycan polymerase</fullName>
        <shortName evidence="2">PG polymerase</shortName>
    </alternativeName>
</protein>
<dbReference type="EC" id="2.4.99.28" evidence="2"/>
<dbReference type="EMBL" id="AE017282">
    <property type="protein sequence ID" value="AAU91478.1"/>
    <property type="molecule type" value="Genomic_DNA"/>
</dbReference>
<dbReference type="RefSeq" id="WP_010961655.1">
    <property type="nucleotide sequence ID" value="NC_002977.6"/>
</dbReference>
<dbReference type="SMR" id="Q604V6"/>
<dbReference type="STRING" id="243233.MCA2430"/>
<dbReference type="GeneID" id="88224631"/>
<dbReference type="KEGG" id="mca:MCA2430"/>
<dbReference type="eggNOG" id="COG0772">
    <property type="taxonomic scope" value="Bacteria"/>
</dbReference>
<dbReference type="HOGENOM" id="CLU_029243_1_1_6"/>
<dbReference type="UniPathway" id="UPA00219"/>
<dbReference type="Proteomes" id="UP000006821">
    <property type="component" value="Chromosome"/>
</dbReference>
<dbReference type="GO" id="GO:0032153">
    <property type="term" value="C:cell division site"/>
    <property type="evidence" value="ECO:0007669"/>
    <property type="project" value="UniProtKB-UniRule"/>
</dbReference>
<dbReference type="GO" id="GO:0005886">
    <property type="term" value="C:plasma membrane"/>
    <property type="evidence" value="ECO:0007669"/>
    <property type="project" value="UniProtKB-SubCell"/>
</dbReference>
<dbReference type="GO" id="GO:0015648">
    <property type="term" value="F:lipid-linked peptidoglycan transporter activity"/>
    <property type="evidence" value="ECO:0007669"/>
    <property type="project" value="TreeGrafter"/>
</dbReference>
<dbReference type="GO" id="GO:0008955">
    <property type="term" value="F:peptidoglycan glycosyltransferase activity"/>
    <property type="evidence" value="ECO:0007669"/>
    <property type="project" value="UniProtKB-UniRule"/>
</dbReference>
<dbReference type="GO" id="GO:0071555">
    <property type="term" value="P:cell wall organization"/>
    <property type="evidence" value="ECO:0007669"/>
    <property type="project" value="UniProtKB-KW"/>
</dbReference>
<dbReference type="GO" id="GO:0043093">
    <property type="term" value="P:FtsZ-dependent cytokinesis"/>
    <property type="evidence" value="ECO:0007669"/>
    <property type="project" value="UniProtKB-UniRule"/>
</dbReference>
<dbReference type="GO" id="GO:0009252">
    <property type="term" value="P:peptidoglycan biosynthetic process"/>
    <property type="evidence" value="ECO:0007669"/>
    <property type="project" value="UniProtKB-UniRule"/>
</dbReference>
<dbReference type="GO" id="GO:0008360">
    <property type="term" value="P:regulation of cell shape"/>
    <property type="evidence" value="ECO:0007669"/>
    <property type="project" value="UniProtKB-KW"/>
</dbReference>
<dbReference type="HAMAP" id="MF_00913">
    <property type="entry name" value="PGT_FtsW_proteobact"/>
    <property type="match status" value="1"/>
</dbReference>
<dbReference type="InterPro" id="IPR013437">
    <property type="entry name" value="FtsW"/>
</dbReference>
<dbReference type="InterPro" id="IPR001182">
    <property type="entry name" value="FtsW/RodA"/>
</dbReference>
<dbReference type="NCBIfam" id="TIGR02614">
    <property type="entry name" value="ftsW"/>
    <property type="match status" value="1"/>
</dbReference>
<dbReference type="PANTHER" id="PTHR30474">
    <property type="entry name" value="CELL CYCLE PROTEIN"/>
    <property type="match status" value="1"/>
</dbReference>
<dbReference type="PANTHER" id="PTHR30474:SF2">
    <property type="entry name" value="PEPTIDOGLYCAN GLYCOSYLTRANSFERASE FTSW-RELATED"/>
    <property type="match status" value="1"/>
</dbReference>
<dbReference type="Pfam" id="PF01098">
    <property type="entry name" value="FTSW_RODA_SPOVE"/>
    <property type="match status" value="1"/>
</dbReference>
<feature type="chain" id="PRO_0000415197" description="Probable peptidoglycan glycosyltransferase FtsW">
    <location>
        <begin position="1"/>
        <end position="398"/>
    </location>
</feature>
<feature type="topological domain" description="Cytoplasmic" evidence="1">
    <location>
        <begin position="1"/>
        <end position="20"/>
    </location>
</feature>
<feature type="transmembrane region" description="Helical" evidence="2">
    <location>
        <begin position="21"/>
        <end position="41"/>
    </location>
</feature>
<feature type="topological domain" description="Periplasmic" evidence="1">
    <location>
        <begin position="42"/>
        <end position="57"/>
    </location>
</feature>
<feature type="transmembrane region" description="Helical" evidence="2">
    <location>
        <begin position="58"/>
        <end position="78"/>
    </location>
</feature>
<feature type="topological domain" description="Cytoplasmic" evidence="1">
    <location>
        <begin position="79"/>
        <end position="92"/>
    </location>
</feature>
<feature type="transmembrane region" description="Helical" evidence="2">
    <location>
        <begin position="93"/>
        <end position="113"/>
    </location>
</feature>
<feature type="topological domain" description="Periplasmic" evidence="1">
    <location>
        <begin position="114"/>
        <end position="121"/>
    </location>
</feature>
<feature type="transmembrane region" description="Helical" evidence="2">
    <location>
        <begin position="122"/>
        <end position="142"/>
    </location>
</feature>
<feature type="topological domain" description="Cytoplasmic" evidence="1">
    <location>
        <begin position="143"/>
        <end position="153"/>
    </location>
</feature>
<feature type="transmembrane region" description="Helical" evidence="2">
    <location>
        <begin position="154"/>
        <end position="174"/>
    </location>
</feature>
<feature type="topological domain" description="Periplasmic" evidence="1">
    <location>
        <begin position="175"/>
        <end position="177"/>
    </location>
</feature>
<feature type="transmembrane region" description="Helical" evidence="2">
    <location>
        <begin position="178"/>
        <end position="198"/>
    </location>
</feature>
<feature type="topological domain" description="Cytoplasmic" evidence="1">
    <location>
        <position position="199"/>
    </location>
</feature>
<feature type="transmembrane region" description="Helical" evidence="2">
    <location>
        <begin position="200"/>
        <end position="220"/>
    </location>
</feature>
<feature type="topological domain" description="Periplasmic" evidence="1">
    <location>
        <begin position="221"/>
        <end position="289"/>
    </location>
</feature>
<feature type="transmembrane region" description="Helical" evidence="2">
    <location>
        <begin position="290"/>
        <end position="310"/>
    </location>
</feature>
<feature type="topological domain" description="Cytoplasmic" evidence="1">
    <location>
        <begin position="311"/>
        <end position="318"/>
    </location>
</feature>
<feature type="transmembrane region" description="Helical" evidence="2">
    <location>
        <begin position="319"/>
        <end position="339"/>
    </location>
</feature>
<feature type="topological domain" description="Periplasmic" evidence="1">
    <location>
        <begin position="340"/>
        <end position="355"/>
    </location>
</feature>
<feature type="transmembrane region" description="Helical" evidence="2">
    <location>
        <begin position="356"/>
        <end position="376"/>
    </location>
</feature>
<feature type="topological domain" description="Cytoplasmic" evidence="1">
    <location>
        <begin position="377"/>
        <end position="398"/>
    </location>
</feature>
<reference key="1">
    <citation type="journal article" date="2004" name="PLoS Biol.">
        <title>Genomic insights into methanotrophy: the complete genome sequence of Methylococcus capsulatus (Bath).</title>
        <authorList>
            <person name="Ward N.L."/>
            <person name="Larsen O."/>
            <person name="Sakwa J."/>
            <person name="Bruseth L."/>
            <person name="Khouri H.M."/>
            <person name="Durkin A.S."/>
            <person name="Dimitrov G."/>
            <person name="Jiang L."/>
            <person name="Scanlan D."/>
            <person name="Kang K.H."/>
            <person name="Lewis M.R."/>
            <person name="Nelson K.E."/>
            <person name="Methe B.A."/>
            <person name="Wu M."/>
            <person name="Heidelberg J.F."/>
            <person name="Paulsen I.T."/>
            <person name="Fouts D.E."/>
            <person name="Ravel J."/>
            <person name="Tettelin H."/>
            <person name="Ren Q."/>
            <person name="Read T.D."/>
            <person name="DeBoy R.T."/>
            <person name="Seshadri R."/>
            <person name="Salzberg S.L."/>
            <person name="Jensen H.B."/>
            <person name="Birkeland N.K."/>
            <person name="Nelson W.C."/>
            <person name="Dodson R.J."/>
            <person name="Grindhaug S.H."/>
            <person name="Holt I.E."/>
            <person name="Eidhammer I."/>
            <person name="Jonasen I."/>
            <person name="Vanaken S."/>
            <person name="Utterback T.R."/>
            <person name="Feldblyum T.V."/>
            <person name="Fraser C.M."/>
            <person name="Lillehaug J.R."/>
            <person name="Eisen J.A."/>
        </authorList>
    </citation>
    <scope>NUCLEOTIDE SEQUENCE [LARGE SCALE GENOMIC DNA]</scope>
    <source>
        <strain>ATCC 33009 / NCIMB 11132 / Bath</strain>
    </source>
</reference>
<accession>Q604V6</accession>